<proteinExistence type="evidence at protein level"/>
<accession>Q81VR6</accession>
<accession>Q6I4S0</accession>
<accession>Q6KYG6</accession>
<dbReference type="EMBL" id="AE016879">
    <property type="protein sequence ID" value="AAP24178.1"/>
    <property type="molecule type" value="Genomic_DNA"/>
</dbReference>
<dbReference type="EMBL" id="AE017334">
    <property type="protein sequence ID" value="AAT29204.1"/>
    <property type="molecule type" value="Genomic_DNA"/>
</dbReference>
<dbReference type="EMBL" id="AE017225">
    <property type="protein sequence ID" value="AAT52461.1"/>
    <property type="molecule type" value="Genomic_DNA"/>
</dbReference>
<dbReference type="RefSeq" id="NP_842692.1">
    <property type="nucleotide sequence ID" value="NC_003997.3"/>
</dbReference>
<dbReference type="RefSeq" id="WP_000245511.1">
    <property type="nucleotide sequence ID" value="NZ_WXXJ01000051.1"/>
</dbReference>
<dbReference type="RefSeq" id="YP_026410.1">
    <property type="nucleotide sequence ID" value="NC_005945.1"/>
</dbReference>
<dbReference type="PDB" id="4PDB">
    <property type="method" value="X-ray"/>
    <property type="resolution" value="2.60 A"/>
    <property type="chains" value="A=1-132"/>
</dbReference>
<dbReference type="PDBsum" id="4PDB"/>
<dbReference type="SMR" id="Q81VR6"/>
<dbReference type="STRING" id="261594.GBAA_0124"/>
<dbReference type="DNASU" id="1087012"/>
<dbReference type="GeneID" id="93010929"/>
<dbReference type="KEGG" id="ban:BA_0124"/>
<dbReference type="KEGG" id="bar:GBAA_0124"/>
<dbReference type="KEGG" id="bat:BAS0124"/>
<dbReference type="PATRIC" id="fig|198094.11.peg.121"/>
<dbReference type="eggNOG" id="COG0096">
    <property type="taxonomic scope" value="Bacteria"/>
</dbReference>
<dbReference type="HOGENOM" id="CLU_098428_0_2_9"/>
<dbReference type="OMA" id="NSAYHDT"/>
<dbReference type="OrthoDB" id="9802617at2"/>
<dbReference type="EvolutionaryTrace" id="Q81VR6"/>
<dbReference type="Proteomes" id="UP000000427">
    <property type="component" value="Chromosome"/>
</dbReference>
<dbReference type="Proteomes" id="UP000000594">
    <property type="component" value="Chromosome"/>
</dbReference>
<dbReference type="GO" id="GO:1990904">
    <property type="term" value="C:ribonucleoprotein complex"/>
    <property type="evidence" value="ECO:0007669"/>
    <property type="project" value="UniProtKB-KW"/>
</dbReference>
<dbReference type="GO" id="GO:0005840">
    <property type="term" value="C:ribosome"/>
    <property type="evidence" value="ECO:0007669"/>
    <property type="project" value="UniProtKB-KW"/>
</dbReference>
<dbReference type="GO" id="GO:0019843">
    <property type="term" value="F:rRNA binding"/>
    <property type="evidence" value="ECO:0007669"/>
    <property type="project" value="UniProtKB-UniRule"/>
</dbReference>
<dbReference type="GO" id="GO:0003735">
    <property type="term" value="F:structural constituent of ribosome"/>
    <property type="evidence" value="ECO:0007669"/>
    <property type="project" value="InterPro"/>
</dbReference>
<dbReference type="GO" id="GO:0006412">
    <property type="term" value="P:translation"/>
    <property type="evidence" value="ECO:0007669"/>
    <property type="project" value="UniProtKB-UniRule"/>
</dbReference>
<dbReference type="FunFam" id="3.30.1370.30:FF:000002">
    <property type="entry name" value="30S ribosomal protein S8"/>
    <property type="match status" value="1"/>
</dbReference>
<dbReference type="FunFam" id="3.30.1490.10:FF:000001">
    <property type="entry name" value="30S ribosomal protein S8"/>
    <property type="match status" value="1"/>
</dbReference>
<dbReference type="Gene3D" id="3.30.1370.30">
    <property type="match status" value="1"/>
</dbReference>
<dbReference type="Gene3D" id="3.30.1490.10">
    <property type="match status" value="1"/>
</dbReference>
<dbReference type="HAMAP" id="MF_01302_B">
    <property type="entry name" value="Ribosomal_uS8_B"/>
    <property type="match status" value="1"/>
</dbReference>
<dbReference type="InterPro" id="IPR000630">
    <property type="entry name" value="Ribosomal_uS8"/>
</dbReference>
<dbReference type="InterPro" id="IPR047863">
    <property type="entry name" value="Ribosomal_uS8_CS"/>
</dbReference>
<dbReference type="InterPro" id="IPR035987">
    <property type="entry name" value="Ribosomal_uS8_sf"/>
</dbReference>
<dbReference type="NCBIfam" id="NF001109">
    <property type="entry name" value="PRK00136.1"/>
    <property type="match status" value="1"/>
</dbReference>
<dbReference type="PANTHER" id="PTHR11758">
    <property type="entry name" value="40S RIBOSOMAL PROTEIN S15A"/>
    <property type="match status" value="1"/>
</dbReference>
<dbReference type="Pfam" id="PF00410">
    <property type="entry name" value="Ribosomal_S8"/>
    <property type="match status" value="1"/>
</dbReference>
<dbReference type="SUPFAM" id="SSF56047">
    <property type="entry name" value="Ribosomal protein S8"/>
    <property type="match status" value="1"/>
</dbReference>
<dbReference type="PROSITE" id="PS00053">
    <property type="entry name" value="RIBOSOMAL_S8"/>
    <property type="match status" value="1"/>
</dbReference>
<reference key="1">
    <citation type="journal article" date="2003" name="Nature">
        <title>The genome sequence of Bacillus anthracis Ames and comparison to closely related bacteria.</title>
        <authorList>
            <person name="Read T.D."/>
            <person name="Peterson S.N."/>
            <person name="Tourasse N.J."/>
            <person name="Baillie L.W."/>
            <person name="Paulsen I.T."/>
            <person name="Nelson K.E."/>
            <person name="Tettelin H."/>
            <person name="Fouts D.E."/>
            <person name="Eisen J.A."/>
            <person name="Gill S.R."/>
            <person name="Holtzapple E.K."/>
            <person name="Okstad O.A."/>
            <person name="Helgason E."/>
            <person name="Rilstone J."/>
            <person name="Wu M."/>
            <person name="Kolonay J.F."/>
            <person name="Beanan M.J."/>
            <person name="Dodson R.J."/>
            <person name="Brinkac L.M."/>
            <person name="Gwinn M.L."/>
            <person name="DeBoy R.T."/>
            <person name="Madpu R."/>
            <person name="Daugherty S.C."/>
            <person name="Durkin A.S."/>
            <person name="Haft D.H."/>
            <person name="Nelson W.C."/>
            <person name="Peterson J.D."/>
            <person name="Pop M."/>
            <person name="Khouri H.M."/>
            <person name="Radune D."/>
            <person name="Benton J.L."/>
            <person name="Mahamoud Y."/>
            <person name="Jiang L."/>
            <person name="Hance I.R."/>
            <person name="Weidman J.F."/>
            <person name="Berry K.J."/>
            <person name="Plaut R.D."/>
            <person name="Wolf A.M."/>
            <person name="Watkins K.L."/>
            <person name="Nierman W.C."/>
            <person name="Hazen A."/>
            <person name="Cline R.T."/>
            <person name="Redmond C."/>
            <person name="Thwaite J.E."/>
            <person name="White O."/>
            <person name="Salzberg S.L."/>
            <person name="Thomason B."/>
            <person name="Friedlander A.M."/>
            <person name="Koehler T.M."/>
            <person name="Hanna P.C."/>
            <person name="Kolstoe A.-B."/>
            <person name="Fraser C.M."/>
        </authorList>
    </citation>
    <scope>NUCLEOTIDE SEQUENCE [LARGE SCALE GENOMIC DNA]</scope>
    <source>
        <strain>Ames / isolate Porton</strain>
    </source>
</reference>
<reference key="2">
    <citation type="journal article" date="2009" name="J. Bacteriol.">
        <title>The complete genome sequence of Bacillus anthracis Ames 'Ancestor'.</title>
        <authorList>
            <person name="Ravel J."/>
            <person name="Jiang L."/>
            <person name="Stanley S.T."/>
            <person name="Wilson M.R."/>
            <person name="Decker R.S."/>
            <person name="Read T.D."/>
            <person name="Worsham P."/>
            <person name="Keim P.S."/>
            <person name="Salzberg S.L."/>
            <person name="Fraser-Liggett C.M."/>
            <person name="Rasko D.A."/>
        </authorList>
    </citation>
    <scope>NUCLEOTIDE SEQUENCE [LARGE SCALE GENOMIC DNA]</scope>
    <source>
        <strain>Ames ancestor</strain>
    </source>
</reference>
<reference key="3">
    <citation type="submission" date="2004-01" db="EMBL/GenBank/DDBJ databases">
        <title>Complete genome sequence of Bacillus anthracis Sterne.</title>
        <authorList>
            <person name="Brettin T.S."/>
            <person name="Bruce D."/>
            <person name="Challacombe J.F."/>
            <person name="Gilna P."/>
            <person name="Han C."/>
            <person name="Hill K."/>
            <person name="Hitchcock P."/>
            <person name="Jackson P."/>
            <person name="Keim P."/>
            <person name="Longmire J."/>
            <person name="Lucas S."/>
            <person name="Okinaka R."/>
            <person name="Richardson P."/>
            <person name="Rubin E."/>
            <person name="Tice H."/>
        </authorList>
    </citation>
    <scope>NUCLEOTIDE SEQUENCE [LARGE SCALE GENOMIC DNA]</scope>
    <source>
        <strain>Sterne</strain>
    </source>
</reference>
<organism>
    <name type="scientific">Bacillus anthracis</name>
    <dbReference type="NCBI Taxonomy" id="1392"/>
    <lineage>
        <taxon>Bacteria</taxon>
        <taxon>Bacillati</taxon>
        <taxon>Bacillota</taxon>
        <taxon>Bacilli</taxon>
        <taxon>Bacillales</taxon>
        <taxon>Bacillaceae</taxon>
        <taxon>Bacillus</taxon>
        <taxon>Bacillus cereus group</taxon>
    </lineage>
</organism>
<sequence length="132" mass="14882">MVMTDPIADMLTRIRNANMVRHEKLEVPASKIKKEIAELLKREGFIRDVEYIEDNKQGILRIFLKYGANNERVITGLKRISKPGLRVYAKADEVPRVLNGLGIALVSTSKGVMTDKDARQLQTGGEVVAYVW</sequence>
<name>RS8_BACAN</name>
<protein>
    <recommendedName>
        <fullName evidence="2">Small ribosomal subunit protein uS8</fullName>
    </recommendedName>
    <alternativeName>
        <fullName evidence="3">30S ribosomal protein S8</fullName>
    </alternativeName>
</protein>
<gene>
    <name evidence="2" type="primary">rpsH</name>
    <name type="ordered locus">BA_0124</name>
    <name type="ordered locus">GBAA_0124</name>
    <name type="ordered locus">BAS0124</name>
</gene>
<evidence type="ECO:0000250" key="1"/>
<evidence type="ECO:0000255" key="2">
    <source>
        <dbReference type="HAMAP-Rule" id="MF_01302"/>
    </source>
</evidence>
<evidence type="ECO:0000305" key="3"/>
<evidence type="ECO:0007829" key="4">
    <source>
        <dbReference type="PDB" id="4PDB"/>
    </source>
</evidence>
<keyword id="KW-0002">3D-structure</keyword>
<keyword id="KW-1185">Reference proteome</keyword>
<keyword id="KW-0687">Ribonucleoprotein</keyword>
<keyword id="KW-0689">Ribosomal protein</keyword>
<keyword id="KW-0694">RNA-binding</keyword>
<keyword id="KW-0699">rRNA-binding</keyword>
<comment type="function">
    <text evidence="2">One of the primary rRNA binding proteins, it binds directly to 16S rRNA central domain where it helps coordinate assembly of the platform of the 30S subunit.</text>
</comment>
<comment type="subunit">
    <text evidence="2">Part of the 30S ribosomal subunit. Contacts proteins S5 and S12.</text>
</comment>
<comment type="similarity">
    <text evidence="2">Belongs to the universal ribosomal protein uS8 family.</text>
</comment>
<feature type="initiator methionine" description="Removed" evidence="1">
    <location>
        <position position="1"/>
    </location>
</feature>
<feature type="chain" id="PRO_0000126357" description="Small ribosomal subunit protein uS8">
    <location>
        <begin position="2"/>
        <end position="132"/>
    </location>
</feature>
<feature type="helix" evidence="4">
    <location>
        <begin position="6"/>
        <end position="19"/>
    </location>
</feature>
<feature type="strand" evidence="4">
    <location>
        <begin position="23"/>
        <end position="28"/>
    </location>
</feature>
<feature type="helix" evidence="4">
    <location>
        <begin position="31"/>
        <end position="42"/>
    </location>
</feature>
<feature type="strand" evidence="4">
    <location>
        <begin position="45"/>
        <end position="52"/>
    </location>
</feature>
<feature type="strand" evidence="4">
    <location>
        <begin position="55"/>
        <end position="57"/>
    </location>
</feature>
<feature type="strand" evidence="4">
    <location>
        <begin position="59"/>
        <end position="64"/>
    </location>
</feature>
<feature type="strand" evidence="4">
    <location>
        <begin position="77"/>
        <end position="79"/>
    </location>
</feature>
<feature type="turn" evidence="4">
    <location>
        <begin position="91"/>
        <end position="93"/>
    </location>
</feature>
<feature type="helix" evidence="4">
    <location>
        <begin position="98"/>
        <end position="100"/>
    </location>
</feature>
<feature type="strand" evidence="4">
    <location>
        <begin position="102"/>
        <end position="108"/>
    </location>
</feature>
<feature type="strand" evidence="4">
    <location>
        <begin position="111"/>
        <end position="113"/>
    </location>
</feature>
<feature type="helix" evidence="4">
    <location>
        <begin position="115"/>
        <end position="121"/>
    </location>
</feature>
<feature type="strand" evidence="4">
    <location>
        <begin position="125"/>
        <end position="131"/>
    </location>
</feature>